<feature type="chain" id="PRO_0000328888" description="Intraflagellar transport protein 57 homolog">
    <location>
        <begin position="1"/>
        <end position="411"/>
    </location>
</feature>
<feature type="region of interest" description="pDED">
    <location>
        <begin position="317"/>
        <end position="408"/>
    </location>
</feature>
<feature type="coiled-coil region" evidence="2">
    <location>
        <begin position="161"/>
        <end position="185"/>
    </location>
</feature>
<feature type="coiled-coil region" evidence="2">
    <location>
        <begin position="261"/>
        <end position="351"/>
    </location>
</feature>
<sequence>MSEDSRRVEDDDRGPGAAYQAFLMMEDLLDKLKLLSYEDEVLRKQNMKPLSRHYFALPTNPGEQFYMFCTLAAWLISKAGHHFDQPQEYDDPNATISNILSELRSFGYSVDFPPSRLKAGYGEQVCYVLDCFAEEVLKHIHFSWKRPTYPTEEQDEENVIEDDAELTLNKIEDEIAEEDSDNDQEHFIDLNALSAQTQKLNTKESSKPEEILESNTDAAEWILEVERVLPQLKVTIRTDNKDWRVHVDQMHQHRDGIDTSLKETKGYLDKLHNEVAKALEKVSSREKYINNQLEQLVQEYRSVQAQLSEAKERYQQASGGVTERTRILAEITEELEKVKQEMEEKGSSMTDGAPLVKIKQALTKLKHEIVQMDIRTGVVEHTLLQSTLKEKSNMTRDMHALNIPESSIGAY</sequence>
<dbReference type="EMBL" id="CR760693">
    <property type="protein sequence ID" value="CAJ82224.1"/>
    <property type="molecule type" value="mRNA"/>
</dbReference>
<dbReference type="RefSeq" id="NP_001016561.1">
    <property type="nucleotide sequence ID" value="NM_001016561.2"/>
</dbReference>
<dbReference type="RefSeq" id="XP_012812437.1">
    <property type="nucleotide sequence ID" value="XM_012956983.3"/>
</dbReference>
<dbReference type="RefSeq" id="XP_012812438.1">
    <property type="nucleotide sequence ID" value="XM_012956984.3"/>
</dbReference>
<dbReference type="RefSeq" id="XP_017946753.1">
    <property type="nucleotide sequence ID" value="XM_018091264.2"/>
</dbReference>
<dbReference type="SMR" id="Q28HX4"/>
<dbReference type="FunCoup" id="Q28HX4">
    <property type="interactions" value="563"/>
</dbReference>
<dbReference type="STRING" id="8364.ENSXETP00000022146"/>
<dbReference type="PaxDb" id="8364-ENSXETP00000055345"/>
<dbReference type="GeneID" id="549315"/>
<dbReference type="KEGG" id="xtr:549315"/>
<dbReference type="AGR" id="Xenbase:XB-GENE-999089"/>
<dbReference type="CTD" id="55081"/>
<dbReference type="eggNOG" id="KOG0972">
    <property type="taxonomic scope" value="Eukaryota"/>
</dbReference>
<dbReference type="HOGENOM" id="CLU_039132_0_0_1"/>
<dbReference type="InParanoid" id="Q28HX4"/>
<dbReference type="OMA" id="VHAHDQD"/>
<dbReference type="OrthoDB" id="423881at2759"/>
<dbReference type="PhylomeDB" id="Q28HX4"/>
<dbReference type="TreeFam" id="TF106156"/>
<dbReference type="Reactome" id="R-XTR-5610787">
    <property type="pathway name" value="Hedgehog 'off' state"/>
</dbReference>
<dbReference type="Proteomes" id="UP000008143">
    <property type="component" value="Chromosome 2"/>
</dbReference>
<dbReference type="Bgee" id="ENSXETG00000026185">
    <property type="expression patterns" value="Expressed in testis and 12 other cell types or tissues"/>
</dbReference>
<dbReference type="GO" id="GO:0036064">
    <property type="term" value="C:ciliary basal body"/>
    <property type="evidence" value="ECO:0000250"/>
    <property type="project" value="UniProtKB"/>
</dbReference>
<dbReference type="GO" id="GO:0005737">
    <property type="term" value="C:cytoplasm"/>
    <property type="evidence" value="ECO:0007669"/>
    <property type="project" value="UniProtKB-KW"/>
</dbReference>
<dbReference type="GO" id="GO:0030992">
    <property type="term" value="C:intraciliary transport particle B"/>
    <property type="evidence" value="ECO:0000250"/>
    <property type="project" value="UniProtKB"/>
</dbReference>
<dbReference type="GO" id="GO:0006915">
    <property type="term" value="P:apoptotic process"/>
    <property type="evidence" value="ECO:0000250"/>
    <property type="project" value="UniProtKB"/>
</dbReference>
<dbReference type="GO" id="GO:0042981">
    <property type="term" value="P:regulation of apoptotic process"/>
    <property type="evidence" value="ECO:0000250"/>
    <property type="project" value="UniProtKB"/>
</dbReference>
<dbReference type="InterPro" id="IPR019530">
    <property type="entry name" value="Intra-flagellar_transport_57"/>
</dbReference>
<dbReference type="PANTHER" id="PTHR16011">
    <property type="entry name" value="IFT57/HIPPI"/>
    <property type="match status" value="1"/>
</dbReference>
<dbReference type="PANTHER" id="PTHR16011:SF0">
    <property type="entry name" value="INTRAFLAGELLAR TRANSPORT PROTEIN 57 HOMOLOG"/>
    <property type="match status" value="1"/>
</dbReference>
<dbReference type="Pfam" id="PF10498">
    <property type="entry name" value="IFT57"/>
    <property type="match status" value="1"/>
</dbReference>
<comment type="function">
    <text evidence="1">Required for the formation of cilia. May also have pro-apoptotic function (By similarity).</text>
</comment>
<comment type="subcellular location">
    <subcellularLocation>
        <location evidence="1">Cytoplasm</location>
        <location evidence="1">Cytoskeleton</location>
        <location evidence="1">Cilium basal body</location>
    </subcellularLocation>
</comment>
<comment type="similarity">
    <text evidence="3">Belongs to the IFT57 family.</text>
</comment>
<keyword id="KW-0053">Apoptosis</keyword>
<keyword id="KW-0966">Cell projection</keyword>
<keyword id="KW-0969">Cilium</keyword>
<keyword id="KW-0175">Coiled coil</keyword>
<keyword id="KW-0963">Cytoplasm</keyword>
<keyword id="KW-0206">Cytoskeleton</keyword>
<keyword id="KW-1185">Reference proteome</keyword>
<gene>
    <name type="primary">ift57</name>
    <name type="ORF">TEgg009c14.1</name>
</gene>
<organism>
    <name type="scientific">Xenopus tropicalis</name>
    <name type="common">Western clawed frog</name>
    <name type="synonym">Silurana tropicalis</name>
    <dbReference type="NCBI Taxonomy" id="8364"/>
    <lineage>
        <taxon>Eukaryota</taxon>
        <taxon>Metazoa</taxon>
        <taxon>Chordata</taxon>
        <taxon>Craniata</taxon>
        <taxon>Vertebrata</taxon>
        <taxon>Euteleostomi</taxon>
        <taxon>Amphibia</taxon>
        <taxon>Batrachia</taxon>
        <taxon>Anura</taxon>
        <taxon>Pipoidea</taxon>
        <taxon>Pipidae</taxon>
        <taxon>Xenopodinae</taxon>
        <taxon>Xenopus</taxon>
        <taxon>Silurana</taxon>
    </lineage>
</organism>
<proteinExistence type="evidence at transcript level"/>
<protein>
    <recommendedName>
        <fullName>Intraflagellar transport protein 57 homolog</fullName>
    </recommendedName>
</protein>
<reference key="1">
    <citation type="submission" date="2006-10" db="EMBL/GenBank/DDBJ databases">
        <authorList>
            <consortium name="Sanger Xenopus tropicalis EST/cDNA project"/>
        </authorList>
    </citation>
    <scope>NUCLEOTIDE SEQUENCE [LARGE SCALE MRNA]</scope>
    <source>
        <tissue>Egg</tissue>
    </source>
</reference>
<evidence type="ECO:0000250" key="1"/>
<evidence type="ECO:0000255" key="2"/>
<evidence type="ECO:0000305" key="3"/>
<name>IFT57_XENTR</name>
<accession>Q28HX4</accession>